<protein>
    <recommendedName>
        <fullName evidence="2">Transaldolase</fullName>
        <ecNumber evidence="2">2.2.1.2</ecNumber>
    </recommendedName>
</protein>
<comment type="function">
    <text evidence="2">Transaldolase is important for the balance of metabolites in the pentose-phosphate pathway.</text>
</comment>
<comment type="catalytic activity">
    <reaction evidence="2">
        <text>D-sedoheptulose 7-phosphate + D-glyceraldehyde 3-phosphate = D-erythrose 4-phosphate + beta-D-fructose 6-phosphate</text>
        <dbReference type="Rhea" id="RHEA:17053"/>
        <dbReference type="ChEBI" id="CHEBI:16897"/>
        <dbReference type="ChEBI" id="CHEBI:57483"/>
        <dbReference type="ChEBI" id="CHEBI:57634"/>
        <dbReference type="ChEBI" id="CHEBI:59776"/>
        <dbReference type="EC" id="2.2.1.2"/>
    </reaction>
</comment>
<comment type="pathway">
    <text evidence="2">Carbohydrate degradation; pentose phosphate pathway; D-glyceraldehyde 3-phosphate and beta-D-fructose 6-phosphate from D-ribose 5-phosphate and D-xylulose 5-phosphate (non-oxidative stage): step 2/3.</text>
</comment>
<comment type="subunit">
    <text evidence="1">Homodimer.</text>
</comment>
<comment type="subcellular location">
    <subcellularLocation>
        <location evidence="2">Cytoplasm</location>
    </subcellularLocation>
</comment>
<comment type="similarity">
    <text evidence="2">Belongs to the transaldolase family. Type 1 subfamily.</text>
</comment>
<gene>
    <name evidence="2" type="primary">tal</name>
    <name type="ordered locus">VFMJ11_A0772</name>
</gene>
<name>TAL_ALIFM</name>
<accession>B5EUF3</accession>
<keyword id="KW-0963">Cytoplasm</keyword>
<keyword id="KW-0570">Pentose shunt</keyword>
<keyword id="KW-0704">Schiff base</keyword>
<keyword id="KW-0808">Transferase</keyword>
<feature type="chain" id="PRO_1000126258" description="Transaldolase">
    <location>
        <begin position="1"/>
        <end position="316"/>
    </location>
</feature>
<feature type="active site" description="Schiff-base intermediate with substrate" evidence="2">
    <location>
        <position position="132"/>
    </location>
</feature>
<sequence length="316" mass="34702">MTTKLEQLRKLTTVVADTGDIEAIAKYTPEDATTNPSLILKAAEITEYAPLIDASIEYAKAQSNDKAQQVQDTCDMLAVNIGKEILKVVPGRISTEVDARLSYDTEGSVAKARQLIKMYNDAGITNDRILIKLASTWEGIRAAEILEKEGINCNLTLLFSFAQARACAEAGVYLISPFVGRIMDWYKAKEGRDFEPSEDPGVVSVTGIYNYYKEHGYNTVVMGASFRNIGEILELAGCDRLTISPNLLQELEEATGEVVEKLVDTNGNKARPAAMTHAEFLWDHNQDAMAVEKLAEGIRNFAVDQGKLEAMIAAKL</sequence>
<organism>
    <name type="scientific">Aliivibrio fischeri (strain MJ11)</name>
    <name type="common">Vibrio fischeri</name>
    <dbReference type="NCBI Taxonomy" id="388396"/>
    <lineage>
        <taxon>Bacteria</taxon>
        <taxon>Pseudomonadati</taxon>
        <taxon>Pseudomonadota</taxon>
        <taxon>Gammaproteobacteria</taxon>
        <taxon>Vibrionales</taxon>
        <taxon>Vibrionaceae</taxon>
        <taxon>Aliivibrio</taxon>
    </lineage>
</organism>
<reference key="1">
    <citation type="submission" date="2008-08" db="EMBL/GenBank/DDBJ databases">
        <title>Complete sequence of Vibrio fischeri strain MJ11.</title>
        <authorList>
            <person name="Mandel M.J."/>
            <person name="Stabb E.V."/>
            <person name="Ruby E.G."/>
            <person name="Ferriera S."/>
            <person name="Johnson J."/>
            <person name="Kravitz S."/>
            <person name="Beeson K."/>
            <person name="Sutton G."/>
            <person name="Rogers Y.-H."/>
            <person name="Friedman R."/>
            <person name="Frazier M."/>
            <person name="Venter J.C."/>
        </authorList>
    </citation>
    <scope>NUCLEOTIDE SEQUENCE [LARGE SCALE GENOMIC DNA]</scope>
    <source>
        <strain>MJ11</strain>
    </source>
</reference>
<proteinExistence type="inferred from homology"/>
<evidence type="ECO:0000250" key="1"/>
<evidence type="ECO:0000255" key="2">
    <source>
        <dbReference type="HAMAP-Rule" id="MF_00492"/>
    </source>
</evidence>
<dbReference type="EC" id="2.2.1.2" evidence="2"/>
<dbReference type="EMBL" id="CP001133">
    <property type="protein sequence ID" value="ACH64356.1"/>
    <property type="molecule type" value="Genomic_DNA"/>
</dbReference>
<dbReference type="RefSeq" id="WP_005422955.1">
    <property type="nucleotide sequence ID" value="NC_011186.1"/>
</dbReference>
<dbReference type="SMR" id="B5EUF3"/>
<dbReference type="KEGG" id="vfm:VFMJ11_A0772"/>
<dbReference type="HOGENOM" id="CLU_047470_0_1_6"/>
<dbReference type="UniPathway" id="UPA00115">
    <property type="reaction ID" value="UER00414"/>
</dbReference>
<dbReference type="Proteomes" id="UP000001857">
    <property type="component" value="Chromosome II"/>
</dbReference>
<dbReference type="GO" id="GO:0005829">
    <property type="term" value="C:cytosol"/>
    <property type="evidence" value="ECO:0007669"/>
    <property type="project" value="TreeGrafter"/>
</dbReference>
<dbReference type="GO" id="GO:0004801">
    <property type="term" value="F:transaldolase activity"/>
    <property type="evidence" value="ECO:0000250"/>
    <property type="project" value="UniProtKB"/>
</dbReference>
<dbReference type="GO" id="GO:0005975">
    <property type="term" value="P:carbohydrate metabolic process"/>
    <property type="evidence" value="ECO:0007669"/>
    <property type="project" value="InterPro"/>
</dbReference>
<dbReference type="GO" id="GO:0006098">
    <property type="term" value="P:pentose-phosphate shunt"/>
    <property type="evidence" value="ECO:0007669"/>
    <property type="project" value="UniProtKB-UniRule"/>
</dbReference>
<dbReference type="CDD" id="cd00957">
    <property type="entry name" value="Transaldolase_TalAB"/>
    <property type="match status" value="1"/>
</dbReference>
<dbReference type="FunFam" id="3.20.20.70:FF:000002">
    <property type="entry name" value="Transaldolase"/>
    <property type="match status" value="1"/>
</dbReference>
<dbReference type="Gene3D" id="3.20.20.70">
    <property type="entry name" value="Aldolase class I"/>
    <property type="match status" value="1"/>
</dbReference>
<dbReference type="HAMAP" id="MF_00492">
    <property type="entry name" value="Transaldolase_1"/>
    <property type="match status" value="1"/>
</dbReference>
<dbReference type="InterPro" id="IPR013785">
    <property type="entry name" value="Aldolase_TIM"/>
</dbReference>
<dbReference type="InterPro" id="IPR001585">
    <property type="entry name" value="TAL/FSA"/>
</dbReference>
<dbReference type="InterPro" id="IPR004730">
    <property type="entry name" value="Transaldolase_1"/>
</dbReference>
<dbReference type="InterPro" id="IPR018225">
    <property type="entry name" value="Transaldolase_AS"/>
</dbReference>
<dbReference type="NCBIfam" id="NF009001">
    <property type="entry name" value="PRK12346.1"/>
    <property type="match status" value="1"/>
</dbReference>
<dbReference type="NCBIfam" id="TIGR00874">
    <property type="entry name" value="talAB"/>
    <property type="match status" value="1"/>
</dbReference>
<dbReference type="PANTHER" id="PTHR10683">
    <property type="entry name" value="TRANSALDOLASE"/>
    <property type="match status" value="1"/>
</dbReference>
<dbReference type="PANTHER" id="PTHR10683:SF18">
    <property type="entry name" value="TRANSALDOLASE"/>
    <property type="match status" value="1"/>
</dbReference>
<dbReference type="Pfam" id="PF00923">
    <property type="entry name" value="TAL_FSA"/>
    <property type="match status" value="1"/>
</dbReference>
<dbReference type="SUPFAM" id="SSF51569">
    <property type="entry name" value="Aldolase"/>
    <property type="match status" value="1"/>
</dbReference>
<dbReference type="PROSITE" id="PS01054">
    <property type="entry name" value="TRANSALDOLASE_1"/>
    <property type="match status" value="1"/>
</dbReference>
<dbReference type="PROSITE" id="PS00958">
    <property type="entry name" value="TRANSALDOLASE_2"/>
    <property type="match status" value="1"/>
</dbReference>